<proteinExistence type="inferred from homology"/>
<dbReference type="EMBL" id="CP001638">
    <property type="protein sequence ID" value="ACS23051.1"/>
    <property type="molecule type" value="Genomic_DNA"/>
</dbReference>
<dbReference type="SMR" id="C5D3R7"/>
<dbReference type="STRING" id="471223.GWCH70_0111"/>
<dbReference type="KEGG" id="gwc:GWCH70_0111"/>
<dbReference type="eggNOG" id="COG0087">
    <property type="taxonomic scope" value="Bacteria"/>
</dbReference>
<dbReference type="HOGENOM" id="CLU_044142_4_1_9"/>
<dbReference type="OrthoDB" id="9806135at2"/>
<dbReference type="GO" id="GO:0022625">
    <property type="term" value="C:cytosolic large ribosomal subunit"/>
    <property type="evidence" value="ECO:0007669"/>
    <property type="project" value="TreeGrafter"/>
</dbReference>
<dbReference type="GO" id="GO:0019843">
    <property type="term" value="F:rRNA binding"/>
    <property type="evidence" value="ECO:0007669"/>
    <property type="project" value="UniProtKB-UniRule"/>
</dbReference>
<dbReference type="GO" id="GO:0003735">
    <property type="term" value="F:structural constituent of ribosome"/>
    <property type="evidence" value="ECO:0007669"/>
    <property type="project" value="InterPro"/>
</dbReference>
<dbReference type="GO" id="GO:0006412">
    <property type="term" value="P:translation"/>
    <property type="evidence" value="ECO:0007669"/>
    <property type="project" value="UniProtKB-UniRule"/>
</dbReference>
<dbReference type="FunFam" id="2.40.30.10:FF:000004">
    <property type="entry name" value="50S ribosomal protein L3"/>
    <property type="match status" value="1"/>
</dbReference>
<dbReference type="FunFam" id="3.30.160.810:FF:000002">
    <property type="entry name" value="50S ribosomal protein L3"/>
    <property type="match status" value="1"/>
</dbReference>
<dbReference type="Gene3D" id="3.30.160.810">
    <property type="match status" value="1"/>
</dbReference>
<dbReference type="Gene3D" id="2.40.30.10">
    <property type="entry name" value="Translation factors"/>
    <property type="match status" value="1"/>
</dbReference>
<dbReference type="HAMAP" id="MF_01325_B">
    <property type="entry name" value="Ribosomal_uL3_B"/>
    <property type="match status" value="1"/>
</dbReference>
<dbReference type="InterPro" id="IPR000597">
    <property type="entry name" value="Ribosomal_uL3"/>
</dbReference>
<dbReference type="InterPro" id="IPR019927">
    <property type="entry name" value="Ribosomal_uL3_bac/org-type"/>
</dbReference>
<dbReference type="InterPro" id="IPR019926">
    <property type="entry name" value="Ribosomal_uL3_CS"/>
</dbReference>
<dbReference type="InterPro" id="IPR009000">
    <property type="entry name" value="Transl_B-barrel_sf"/>
</dbReference>
<dbReference type="NCBIfam" id="TIGR03625">
    <property type="entry name" value="L3_bact"/>
    <property type="match status" value="1"/>
</dbReference>
<dbReference type="PANTHER" id="PTHR11229">
    <property type="entry name" value="50S RIBOSOMAL PROTEIN L3"/>
    <property type="match status" value="1"/>
</dbReference>
<dbReference type="PANTHER" id="PTHR11229:SF16">
    <property type="entry name" value="LARGE RIBOSOMAL SUBUNIT PROTEIN UL3C"/>
    <property type="match status" value="1"/>
</dbReference>
<dbReference type="Pfam" id="PF00297">
    <property type="entry name" value="Ribosomal_L3"/>
    <property type="match status" value="1"/>
</dbReference>
<dbReference type="SUPFAM" id="SSF50447">
    <property type="entry name" value="Translation proteins"/>
    <property type="match status" value="1"/>
</dbReference>
<dbReference type="PROSITE" id="PS00474">
    <property type="entry name" value="RIBOSOMAL_L3"/>
    <property type="match status" value="1"/>
</dbReference>
<feature type="chain" id="PRO_1000214511" description="Large ribosomal subunit protein uL3">
    <location>
        <begin position="1"/>
        <end position="211"/>
    </location>
</feature>
<feature type="region of interest" description="Disordered" evidence="2">
    <location>
        <begin position="122"/>
        <end position="147"/>
    </location>
</feature>
<name>RL3_GEOSW</name>
<accession>C5D3R7</accession>
<gene>
    <name evidence="1" type="primary">rplC</name>
    <name type="ordered locus">GWCH70_0111</name>
</gene>
<comment type="function">
    <text evidence="1">One of the primary rRNA binding proteins, it binds directly near the 3'-end of the 23S rRNA, where it nucleates assembly of the 50S subunit.</text>
</comment>
<comment type="subunit">
    <text evidence="1">Part of the 50S ribosomal subunit. Forms a cluster with proteins L14 and L19.</text>
</comment>
<comment type="similarity">
    <text evidence="1">Belongs to the universal ribosomal protein uL3 family.</text>
</comment>
<organism>
    <name type="scientific">Geobacillus sp. (strain WCH70)</name>
    <dbReference type="NCBI Taxonomy" id="471223"/>
    <lineage>
        <taxon>Bacteria</taxon>
        <taxon>Bacillati</taxon>
        <taxon>Bacillota</taxon>
        <taxon>Bacilli</taxon>
        <taxon>Bacillales</taxon>
        <taxon>Anoxybacillaceae</taxon>
        <taxon>Geobacillus</taxon>
    </lineage>
</organism>
<keyword id="KW-0687">Ribonucleoprotein</keyword>
<keyword id="KW-0689">Ribosomal protein</keyword>
<keyword id="KW-0694">RNA-binding</keyword>
<keyword id="KW-0699">rRNA-binding</keyword>
<evidence type="ECO:0000255" key="1">
    <source>
        <dbReference type="HAMAP-Rule" id="MF_01325"/>
    </source>
</evidence>
<evidence type="ECO:0000256" key="2">
    <source>
        <dbReference type="SAM" id="MobiDB-lite"/>
    </source>
</evidence>
<evidence type="ECO:0000305" key="3"/>
<protein>
    <recommendedName>
        <fullName evidence="1">Large ribosomal subunit protein uL3</fullName>
    </recommendedName>
    <alternativeName>
        <fullName evidence="3">50S ribosomal protein L3</fullName>
    </alternativeName>
</protein>
<reference key="1">
    <citation type="submission" date="2009-06" db="EMBL/GenBank/DDBJ databases">
        <title>Complete sequence of chromosome of Geopacillus sp. WCH70.</title>
        <authorList>
            <consortium name="US DOE Joint Genome Institute"/>
            <person name="Lucas S."/>
            <person name="Copeland A."/>
            <person name="Lapidus A."/>
            <person name="Glavina del Rio T."/>
            <person name="Dalin E."/>
            <person name="Tice H."/>
            <person name="Bruce D."/>
            <person name="Goodwin L."/>
            <person name="Pitluck S."/>
            <person name="Chertkov O."/>
            <person name="Brettin T."/>
            <person name="Detter J.C."/>
            <person name="Han C."/>
            <person name="Larimer F."/>
            <person name="Land M."/>
            <person name="Hauser L."/>
            <person name="Kyrpides N."/>
            <person name="Mikhailova N."/>
            <person name="Brumm P."/>
            <person name="Mead D.A."/>
            <person name="Richardson P."/>
        </authorList>
    </citation>
    <scope>NUCLEOTIDE SEQUENCE [LARGE SCALE GENOMIC DNA]</scope>
    <source>
        <strain>WCH70</strain>
    </source>
</reference>
<sequence>MTKGILGRKIGMTQVFAENGDLIPVTVIEATPNVVLQKKTIEKDGYEAIQLGFEDISEKRANKPQIGHAAKANTAPKRFIREIRGANIDEYEVGQEVKVDIFAEGDIVDVTGISKGKGFQGAIKRHGQSRGPMAHGSRYHRRPGSMGAIAPNRVFKSKELPGRMGGQRVTIQNLKIVKVDPERNLLLIKGNVPGPRKGLVIVKSAVKAKAK</sequence>